<sequence>FLPIASLLGKYL</sequence>
<dbReference type="GO" id="GO:0005576">
    <property type="term" value="C:extracellular region"/>
    <property type="evidence" value="ECO:0007669"/>
    <property type="project" value="UniProtKB-SubCell"/>
</dbReference>
<dbReference type="GO" id="GO:0042742">
    <property type="term" value="P:defense response to bacterium"/>
    <property type="evidence" value="ECO:0007669"/>
    <property type="project" value="UniProtKB-KW"/>
</dbReference>
<keyword id="KW-0878">Amphibian defense peptide</keyword>
<keyword id="KW-0044">Antibiotic</keyword>
<keyword id="KW-0929">Antimicrobial</keyword>
<keyword id="KW-0903">Direct protein sequencing</keyword>
<keyword id="KW-0964">Secreted</keyword>
<proteinExistence type="evidence at protein level"/>
<accession>P82820</accession>
<protein>
    <recommendedName>
        <fullName evidence="2">Ranatuerin-5</fullName>
    </recommendedName>
    <alternativeName>
        <fullName evidence="3">Temporin</fullName>
    </alternativeName>
</protein>
<organism>
    <name type="scientific">Aquarana catesbeiana</name>
    <name type="common">American bullfrog</name>
    <name type="synonym">Rana catesbeiana</name>
    <dbReference type="NCBI Taxonomy" id="8400"/>
    <lineage>
        <taxon>Eukaryota</taxon>
        <taxon>Metazoa</taxon>
        <taxon>Chordata</taxon>
        <taxon>Craniata</taxon>
        <taxon>Vertebrata</taxon>
        <taxon>Euteleostomi</taxon>
        <taxon>Amphibia</taxon>
        <taxon>Batrachia</taxon>
        <taxon>Anura</taxon>
        <taxon>Neobatrachia</taxon>
        <taxon>Ranoidea</taxon>
        <taxon>Ranidae</taxon>
        <taxon>Aquarana</taxon>
    </lineage>
</organism>
<reference key="1">
    <citation type="journal article" date="1998" name="Biochem. Biophys. Res. Commun.">
        <title>Ranatuerins: antimicrobial peptides isolated from the skin of the American bullfrog, Rana catesbeiana.</title>
        <authorList>
            <person name="Goraya J."/>
            <person name="Knoop F.C."/>
            <person name="Conlon J.M."/>
        </authorList>
    </citation>
    <scope>PROTEIN SEQUENCE</scope>
    <scope>FUNCTION</scope>
    <scope>SUBCELLULAR LOCATION</scope>
    <source>
        <tissue>Skin secretion</tissue>
    </source>
</reference>
<comment type="function">
    <text evidence="1">May act as an antimicrobial peptide. Show low antibacterial activity against Gram-positive bacterium S.aureus (MIC&gt;200 uM). Shows no detectable hemolytic activity towards human erythrocytes.</text>
</comment>
<comment type="subcellular location">
    <subcellularLocation>
        <location evidence="1">Secreted</location>
    </subcellularLocation>
</comment>
<comment type="tissue specificity">
    <text evidence="4">Expressed by the skin glands.</text>
</comment>
<comment type="similarity">
    <text evidence="3">Belongs to the frog skin active peptide (FSAP) family. Temporin subfamily.</text>
</comment>
<name>TP5_AQUCT</name>
<feature type="peptide" id="PRO_0000043562" description="Ranatuerin-5" evidence="1">
    <location>
        <begin position="1"/>
        <end position="12"/>
    </location>
</feature>
<evidence type="ECO:0000269" key="1">
    <source>
    </source>
</evidence>
<evidence type="ECO:0000303" key="2">
    <source>
    </source>
</evidence>
<evidence type="ECO:0000305" key="3"/>
<evidence type="ECO:0000305" key="4">
    <source>
    </source>
</evidence>